<accession>P46050</accession>
<accession>Q3M578</accession>
<dbReference type="EMBL" id="Z46890">
    <property type="protein sequence ID" value="CAA86992.1"/>
    <property type="molecule type" value="Genomic_DNA"/>
</dbReference>
<dbReference type="EMBL" id="CP000117">
    <property type="protein sequence ID" value="ABA23858.1"/>
    <property type="molecule type" value="Genomic_DNA"/>
</dbReference>
<dbReference type="PIR" id="S70250">
    <property type="entry name" value="S70250"/>
</dbReference>
<dbReference type="SMR" id="P46050"/>
<dbReference type="STRING" id="240292.Ava_4259"/>
<dbReference type="KEGG" id="ava:Ava_4259"/>
<dbReference type="eggNOG" id="COG1145">
    <property type="taxonomic scope" value="Bacteria"/>
</dbReference>
<dbReference type="HOGENOM" id="CLU_155272_0_0_3"/>
<dbReference type="Proteomes" id="UP000002533">
    <property type="component" value="Chromosome"/>
</dbReference>
<dbReference type="GO" id="GO:0051539">
    <property type="term" value="F:4 iron, 4 sulfur cluster binding"/>
    <property type="evidence" value="ECO:0007669"/>
    <property type="project" value="UniProtKB-KW"/>
</dbReference>
<dbReference type="GO" id="GO:0046872">
    <property type="term" value="F:metal ion binding"/>
    <property type="evidence" value="ECO:0007669"/>
    <property type="project" value="UniProtKB-KW"/>
</dbReference>
<dbReference type="GO" id="GO:0009399">
    <property type="term" value="P:nitrogen fixation"/>
    <property type="evidence" value="ECO:0007669"/>
    <property type="project" value="UniProtKB-KW"/>
</dbReference>
<dbReference type="Gene3D" id="3.30.70.20">
    <property type="match status" value="2"/>
</dbReference>
<dbReference type="InterPro" id="IPR017896">
    <property type="entry name" value="4Fe4S_Fe-S-bd"/>
</dbReference>
<dbReference type="InterPro" id="IPR017900">
    <property type="entry name" value="4Fe4S_Fe_S_CS"/>
</dbReference>
<dbReference type="InterPro" id="IPR014283">
    <property type="entry name" value="FdIII_4_nif"/>
</dbReference>
<dbReference type="InterPro" id="IPR050572">
    <property type="entry name" value="Fe-S_Ferredoxin"/>
</dbReference>
<dbReference type="NCBIfam" id="TIGR02936">
    <property type="entry name" value="fdxN_nitrog"/>
    <property type="match status" value="1"/>
</dbReference>
<dbReference type="PANTHER" id="PTHR43687">
    <property type="entry name" value="ADENYLYLSULFATE REDUCTASE, BETA SUBUNIT"/>
    <property type="match status" value="1"/>
</dbReference>
<dbReference type="PANTHER" id="PTHR43687:SF1">
    <property type="entry name" value="FERREDOXIN III"/>
    <property type="match status" value="1"/>
</dbReference>
<dbReference type="Pfam" id="PF12838">
    <property type="entry name" value="Fer4_7"/>
    <property type="match status" value="1"/>
</dbReference>
<dbReference type="SUPFAM" id="SSF54862">
    <property type="entry name" value="4Fe-4S ferredoxins"/>
    <property type="match status" value="1"/>
</dbReference>
<dbReference type="PROSITE" id="PS00198">
    <property type="entry name" value="4FE4S_FER_1"/>
    <property type="match status" value="2"/>
</dbReference>
<dbReference type="PROSITE" id="PS51379">
    <property type="entry name" value="4FE4S_FER_2"/>
    <property type="match status" value="2"/>
</dbReference>
<gene>
    <name type="primary">fdxB</name>
    <name type="ordered locus">Ava_4259</name>
</gene>
<keyword id="KW-0004">4Fe-4S</keyword>
<keyword id="KW-0249">Electron transport</keyword>
<keyword id="KW-0408">Iron</keyword>
<keyword id="KW-0411">Iron-sulfur</keyword>
<keyword id="KW-0479">Metal-binding</keyword>
<keyword id="KW-0535">Nitrogen fixation</keyword>
<keyword id="KW-0677">Repeat</keyword>
<keyword id="KW-0813">Transport</keyword>
<protein>
    <recommendedName>
        <fullName>Ferredoxin-3</fullName>
    </recommendedName>
    <alternativeName>
        <fullName>Ferredoxin III</fullName>
        <shortName>FdIII</shortName>
    </alternativeName>
</protein>
<feature type="chain" id="PRO_0000159186" description="Ferredoxin-3">
    <location>
        <begin position="1"/>
        <end position="98"/>
    </location>
</feature>
<feature type="domain" description="4Fe-4S ferredoxin-type 1" evidence="2">
    <location>
        <begin position="18"/>
        <end position="47"/>
    </location>
</feature>
<feature type="domain" description="4Fe-4S ferredoxin-type 2" evidence="2">
    <location>
        <begin position="66"/>
        <end position="95"/>
    </location>
</feature>
<feature type="binding site" evidence="1">
    <location>
        <position position="27"/>
    </location>
    <ligand>
        <name>[4Fe-4S] cluster</name>
        <dbReference type="ChEBI" id="CHEBI:49883"/>
        <label>1</label>
    </ligand>
</feature>
<feature type="binding site" evidence="1">
    <location>
        <position position="30"/>
    </location>
    <ligand>
        <name>[4Fe-4S] cluster</name>
        <dbReference type="ChEBI" id="CHEBI:49883"/>
        <label>1</label>
    </ligand>
</feature>
<feature type="binding site" evidence="1">
    <location>
        <position position="33"/>
    </location>
    <ligand>
        <name>[4Fe-4S] cluster</name>
        <dbReference type="ChEBI" id="CHEBI:49883"/>
        <label>1</label>
    </ligand>
</feature>
<feature type="binding site" evidence="1">
    <location>
        <position position="37"/>
    </location>
    <ligand>
        <name>[4Fe-4S] cluster</name>
        <dbReference type="ChEBI" id="CHEBI:49883"/>
        <label>1</label>
    </ligand>
</feature>
<feature type="binding site" evidence="1">
    <location>
        <position position="75"/>
    </location>
    <ligand>
        <name>[4Fe-4S] cluster</name>
        <dbReference type="ChEBI" id="CHEBI:49883"/>
        <label>2</label>
    </ligand>
</feature>
<feature type="binding site" evidence="1">
    <location>
        <position position="78"/>
    </location>
    <ligand>
        <name>[4Fe-4S] cluster</name>
        <dbReference type="ChEBI" id="CHEBI:49883"/>
        <label>2</label>
    </ligand>
</feature>
<feature type="binding site" evidence="1">
    <location>
        <position position="81"/>
    </location>
    <ligand>
        <name>[4Fe-4S] cluster</name>
        <dbReference type="ChEBI" id="CHEBI:49883"/>
        <label>2</label>
    </ligand>
</feature>
<feature type="binding site" evidence="1">
    <location>
        <position position="85"/>
    </location>
    <ligand>
        <name>[4Fe-4S] cluster</name>
        <dbReference type="ChEBI" id="CHEBI:49883"/>
        <label>2</label>
    </ligand>
</feature>
<proteinExistence type="inferred from homology"/>
<reference key="1">
    <citation type="journal article" date="1995" name="Mol. Microbiol.">
        <title>Distinct and differently regulated Mo-dependent nitrogen-fixing systems evolved for heterocysts and vegetative cells of Anabaena variabilis ATCC 29413: characterization of the fdxH1/2 gene regions as part of the nif1/2 gene clusters.</title>
        <authorList>
            <person name="Schrautemeier B."/>
            <person name="Neveling U."/>
            <person name="Schmitz S."/>
        </authorList>
    </citation>
    <scope>NUCLEOTIDE SEQUENCE [GENOMIC DNA]</scope>
</reference>
<reference key="2">
    <citation type="journal article" date="2014" name="Stand. Genomic Sci.">
        <title>Complete genome sequence of Anabaena variabilis ATCC 29413.</title>
        <authorList>
            <person name="Thiel T."/>
            <person name="Pratte B.S."/>
            <person name="Zhong J."/>
            <person name="Goodwin L."/>
            <person name="Copeland A."/>
            <person name="Lucas S."/>
            <person name="Han C."/>
            <person name="Pitluck S."/>
            <person name="Land M.L."/>
            <person name="Kyrpides N.C."/>
            <person name="Woyke T."/>
        </authorList>
    </citation>
    <scope>NUCLEOTIDE SEQUENCE [LARGE SCALE GENOMIC DNA]</scope>
    <source>
        <strain>ATCC 29413 / PCC 7937</strain>
    </source>
</reference>
<organism>
    <name type="scientific">Trichormus variabilis (strain ATCC 29413 / PCC 7937)</name>
    <name type="common">Anabaena variabilis</name>
    <dbReference type="NCBI Taxonomy" id="240292"/>
    <lineage>
        <taxon>Bacteria</taxon>
        <taxon>Bacillati</taxon>
        <taxon>Cyanobacteriota</taxon>
        <taxon>Cyanophyceae</taxon>
        <taxon>Nostocales</taxon>
        <taxon>Nostocaceae</taxon>
        <taxon>Trichormus</taxon>
    </lineage>
</organism>
<sequence>MATLTGLTFGGQVWTPQFVEAVNQDKCIGCGRCFKACGRNVLILQALNENGEFVEDEEGEEIERKVMSIIHPEYCIGCQACARACPKNCYTHSPLEHN</sequence>
<evidence type="ECO:0000250" key="1"/>
<evidence type="ECO:0000255" key="2">
    <source>
        <dbReference type="PROSITE-ProRule" id="PRU00711"/>
    </source>
</evidence>
<name>FER3_TRIV2</name>
<comment type="function">
    <text>Ferredoxins are iron-sulfur proteins that transfer electrons in a wide variety of metabolic reactions.</text>
</comment>
<comment type="cofactor">
    <cofactor evidence="1">
        <name>[4Fe-4S] cluster</name>
        <dbReference type="ChEBI" id="CHEBI:49883"/>
    </cofactor>
    <text evidence="1">Binds 2 [4Fe-4S] clusters.</text>
</comment>
<comment type="subunit">
    <text evidence="1">Homodimer.</text>
</comment>